<comment type="function">
    <text evidence="1">Involved in mRNA degradation. Catalyzes the phosphorolysis of single-stranded polyribonucleotides processively in the 3'- to 5'-direction.</text>
</comment>
<comment type="catalytic activity">
    <reaction evidence="1">
        <text>RNA(n+1) + phosphate = RNA(n) + a ribonucleoside 5'-diphosphate</text>
        <dbReference type="Rhea" id="RHEA:22096"/>
        <dbReference type="Rhea" id="RHEA-COMP:14527"/>
        <dbReference type="Rhea" id="RHEA-COMP:17342"/>
        <dbReference type="ChEBI" id="CHEBI:43474"/>
        <dbReference type="ChEBI" id="CHEBI:57930"/>
        <dbReference type="ChEBI" id="CHEBI:140395"/>
        <dbReference type="EC" id="2.7.7.8"/>
    </reaction>
</comment>
<comment type="cofactor">
    <cofactor evidence="1">
        <name>Mg(2+)</name>
        <dbReference type="ChEBI" id="CHEBI:18420"/>
    </cofactor>
</comment>
<comment type="subcellular location">
    <subcellularLocation>
        <location evidence="1">Cytoplasm</location>
    </subcellularLocation>
</comment>
<comment type="similarity">
    <text evidence="1">Belongs to the polyribonucleotide nucleotidyltransferase family.</text>
</comment>
<reference key="1">
    <citation type="journal article" date="2003" name="Proc. Natl. Acad. Sci. U.S.A.">
        <title>The genome sequence of Clostridium tetani, the causative agent of tetanus disease.</title>
        <authorList>
            <person name="Brueggemann H."/>
            <person name="Baeumer S."/>
            <person name="Fricke W.F."/>
            <person name="Wiezer A."/>
            <person name="Liesegang H."/>
            <person name="Decker I."/>
            <person name="Herzberg C."/>
            <person name="Martinez-Arias R."/>
            <person name="Merkl R."/>
            <person name="Henne A."/>
            <person name="Gottschalk G."/>
        </authorList>
    </citation>
    <scope>NUCLEOTIDE SEQUENCE [LARGE SCALE GENOMIC DNA]</scope>
    <source>
        <strain>Massachusetts / E88</strain>
    </source>
</reference>
<sequence>MSHVLETDIAGRTLKVEYGKVGMLSNCAILVSYGDTVVLINANASKEPRDGIDFFPLSVEYEERLYSVGKIPGGFIKREGRPTENAILHARAIDRPLRPLFPKGYRNDVQIVCTVLSVESDNQPDILAMNGASLALCLSSIPFTTPVANVSVGLINGDFILNPTQSQREESILNLTVSATKERVMMIEAGAEEVDEDTMYNAIRFGFEQCQKIVEFQEEAMRRFGKEKVEPVLYLVDKDIEKEVREFAFPMVKEAMYISDKDLRNEKIDEVKEKVKEEFEEKYPENDSDISEALYKMQKEVVRNMILREKRRPDERAFDEIRKISCEVGLLPRTHGTGLFTRGLTQVMTAATIGPLADVQILDSIEDEEFKRYMHHYNFPSYSVGETRPLRGPGRREIGHGALAEKALEPLIPSEEDFPYTIRLVSEVLSSNGSTSQASVCGSTLALLDAGVPIKRPAAGIAMGLVTNDDLTEEKILTDIQGIEDFFGDMDFKVAGTEKGITALQVDTKISGLSDNCIKETLIKAKDARMYILGKIKECIPEHRAELSPYAPRVYTMTIAPEKIRDVIGAGGKTINKIIGETGVQIDIKEDGKIYVMSSDSVGANRALKMINDLTKDVEAGEIYLGKVTRTTNFGAFVEILPGKEGLVHISKLDFTRVNKVEDVVSVGDEILVKVTDIDDQGRINLSRRDAIKKEEDEKTKENNH</sequence>
<proteinExistence type="inferred from homology"/>
<accession>Q895J3</accession>
<organism>
    <name type="scientific">Clostridium tetani (strain Massachusetts / E88)</name>
    <dbReference type="NCBI Taxonomy" id="212717"/>
    <lineage>
        <taxon>Bacteria</taxon>
        <taxon>Bacillati</taxon>
        <taxon>Bacillota</taxon>
        <taxon>Clostridia</taxon>
        <taxon>Eubacteriales</taxon>
        <taxon>Clostridiaceae</taxon>
        <taxon>Clostridium</taxon>
    </lineage>
</organism>
<keyword id="KW-0963">Cytoplasm</keyword>
<keyword id="KW-0460">Magnesium</keyword>
<keyword id="KW-0479">Metal-binding</keyword>
<keyword id="KW-0548">Nucleotidyltransferase</keyword>
<keyword id="KW-1185">Reference proteome</keyword>
<keyword id="KW-0694">RNA-binding</keyword>
<keyword id="KW-0808">Transferase</keyword>
<evidence type="ECO:0000255" key="1">
    <source>
        <dbReference type="HAMAP-Rule" id="MF_01595"/>
    </source>
</evidence>
<dbReference type="EC" id="2.7.7.8" evidence="1"/>
<dbReference type="EMBL" id="AE015927">
    <property type="protein sequence ID" value="AAO35847.1"/>
    <property type="molecule type" value="Genomic_DNA"/>
</dbReference>
<dbReference type="RefSeq" id="WP_011099509.1">
    <property type="nucleotide sequence ID" value="NC_004557.1"/>
</dbReference>
<dbReference type="SMR" id="Q895J3"/>
<dbReference type="STRING" id="212717.CTC_01280"/>
<dbReference type="GeneID" id="24254513"/>
<dbReference type="KEGG" id="ctc:CTC_01280"/>
<dbReference type="HOGENOM" id="CLU_004217_2_2_9"/>
<dbReference type="OrthoDB" id="9804305at2"/>
<dbReference type="Proteomes" id="UP000001412">
    <property type="component" value="Chromosome"/>
</dbReference>
<dbReference type="GO" id="GO:0005829">
    <property type="term" value="C:cytosol"/>
    <property type="evidence" value="ECO:0007669"/>
    <property type="project" value="TreeGrafter"/>
</dbReference>
<dbReference type="GO" id="GO:0000175">
    <property type="term" value="F:3'-5'-RNA exonuclease activity"/>
    <property type="evidence" value="ECO:0007669"/>
    <property type="project" value="TreeGrafter"/>
</dbReference>
<dbReference type="GO" id="GO:0000287">
    <property type="term" value="F:magnesium ion binding"/>
    <property type="evidence" value="ECO:0007669"/>
    <property type="project" value="UniProtKB-UniRule"/>
</dbReference>
<dbReference type="GO" id="GO:0004654">
    <property type="term" value="F:polyribonucleotide nucleotidyltransferase activity"/>
    <property type="evidence" value="ECO:0007669"/>
    <property type="project" value="UniProtKB-UniRule"/>
</dbReference>
<dbReference type="GO" id="GO:0003723">
    <property type="term" value="F:RNA binding"/>
    <property type="evidence" value="ECO:0007669"/>
    <property type="project" value="UniProtKB-UniRule"/>
</dbReference>
<dbReference type="GO" id="GO:0006402">
    <property type="term" value="P:mRNA catabolic process"/>
    <property type="evidence" value="ECO:0007669"/>
    <property type="project" value="UniProtKB-UniRule"/>
</dbReference>
<dbReference type="GO" id="GO:0006396">
    <property type="term" value="P:RNA processing"/>
    <property type="evidence" value="ECO:0007669"/>
    <property type="project" value="InterPro"/>
</dbReference>
<dbReference type="CDD" id="cd02393">
    <property type="entry name" value="KH-I_PNPase"/>
    <property type="match status" value="1"/>
</dbReference>
<dbReference type="CDD" id="cd11363">
    <property type="entry name" value="RNase_PH_PNPase_1"/>
    <property type="match status" value="1"/>
</dbReference>
<dbReference type="CDD" id="cd11364">
    <property type="entry name" value="RNase_PH_PNPase_2"/>
    <property type="match status" value="1"/>
</dbReference>
<dbReference type="CDD" id="cd04472">
    <property type="entry name" value="S1_PNPase"/>
    <property type="match status" value="1"/>
</dbReference>
<dbReference type="FunFam" id="2.40.50.140:FF:000023">
    <property type="entry name" value="Polyribonucleotide nucleotidyltransferase"/>
    <property type="match status" value="1"/>
</dbReference>
<dbReference type="FunFam" id="3.30.1370.10:FF:000001">
    <property type="entry name" value="Polyribonucleotide nucleotidyltransferase"/>
    <property type="match status" value="1"/>
</dbReference>
<dbReference type="FunFam" id="3.30.230.70:FF:000001">
    <property type="entry name" value="Polyribonucleotide nucleotidyltransferase"/>
    <property type="match status" value="1"/>
</dbReference>
<dbReference type="FunFam" id="3.30.230.70:FF:000002">
    <property type="entry name" value="Polyribonucleotide nucleotidyltransferase"/>
    <property type="match status" value="1"/>
</dbReference>
<dbReference type="Gene3D" id="3.30.230.70">
    <property type="entry name" value="GHMP Kinase, N-terminal domain"/>
    <property type="match status" value="2"/>
</dbReference>
<dbReference type="Gene3D" id="3.30.1370.10">
    <property type="entry name" value="K Homology domain, type 1"/>
    <property type="match status" value="1"/>
</dbReference>
<dbReference type="Gene3D" id="2.40.50.140">
    <property type="entry name" value="Nucleic acid-binding proteins"/>
    <property type="match status" value="1"/>
</dbReference>
<dbReference type="HAMAP" id="MF_01595">
    <property type="entry name" value="PNPase"/>
    <property type="match status" value="1"/>
</dbReference>
<dbReference type="InterPro" id="IPR001247">
    <property type="entry name" value="ExoRNase_PH_dom1"/>
</dbReference>
<dbReference type="InterPro" id="IPR015847">
    <property type="entry name" value="ExoRNase_PH_dom2"/>
</dbReference>
<dbReference type="InterPro" id="IPR036345">
    <property type="entry name" value="ExoRNase_PH_dom2_sf"/>
</dbReference>
<dbReference type="InterPro" id="IPR004087">
    <property type="entry name" value="KH_dom"/>
</dbReference>
<dbReference type="InterPro" id="IPR004088">
    <property type="entry name" value="KH_dom_type_1"/>
</dbReference>
<dbReference type="InterPro" id="IPR036612">
    <property type="entry name" value="KH_dom_type_1_sf"/>
</dbReference>
<dbReference type="InterPro" id="IPR012340">
    <property type="entry name" value="NA-bd_OB-fold"/>
</dbReference>
<dbReference type="InterPro" id="IPR012162">
    <property type="entry name" value="PNPase"/>
</dbReference>
<dbReference type="InterPro" id="IPR027408">
    <property type="entry name" value="PNPase/RNase_PH_dom_sf"/>
</dbReference>
<dbReference type="InterPro" id="IPR015848">
    <property type="entry name" value="PNPase_PH_RNA-bd_bac/org-type"/>
</dbReference>
<dbReference type="InterPro" id="IPR036456">
    <property type="entry name" value="PNPase_PH_RNA-bd_sf"/>
</dbReference>
<dbReference type="InterPro" id="IPR020568">
    <property type="entry name" value="Ribosomal_Su5_D2-typ_SF"/>
</dbReference>
<dbReference type="InterPro" id="IPR003029">
    <property type="entry name" value="S1_domain"/>
</dbReference>
<dbReference type="NCBIfam" id="TIGR03591">
    <property type="entry name" value="polynuc_phos"/>
    <property type="match status" value="1"/>
</dbReference>
<dbReference type="NCBIfam" id="NF008805">
    <property type="entry name" value="PRK11824.1"/>
    <property type="match status" value="1"/>
</dbReference>
<dbReference type="PANTHER" id="PTHR11252">
    <property type="entry name" value="POLYRIBONUCLEOTIDE NUCLEOTIDYLTRANSFERASE"/>
    <property type="match status" value="1"/>
</dbReference>
<dbReference type="PANTHER" id="PTHR11252:SF0">
    <property type="entry name" value="POLYRIBONUCLEOTIDE NUCLEOTIDYLTRANSFERASE 1, MITOCHONDRIAL"/>
    <property type="match status" value="1"/>
</dbReference>
<dbReference type="Pfam" id="PF00013">
    <property type="entry name" value="KH_1"/>
    <property type="match status" value="1"/>
</dbReference>
<dbReference type="Pfam" id="PF03726">
    <property type="entry name" value="PNPase"/>
    <property type="match status" value="1"/>
</dbReference>
<dbReference type="Pfam" id="PF01138">
    <property type="entry name" value="RNase_PH"/>
    <property type="match status" value="2"/>
</dbReference>
<dbReference type="Pfam" id="PF03725">
    <property type="entry name" value="RNase_PH_C"/>
    <property type="match status" value="1"/>
</dbReference>
<dbReference type="Pfam" id="PF00575">
    <property type="entry name" value="S1"/>
    <property type="match status" value="1"/>
</dbReference>
<dbReference type="PIRSF" id="PIRSF005499">
    <property type="entry name" value="PNPase"/>
    <property type="match status" value="1"/>
</dbReference>
<dbReference type="SMART" id="SM00322">
    <property type="entry name" value="KH"/>
    <property type="match status" value="1"/>
</dbReference>
<dbReference type="SMART" id="SM00316">
    <property type="entry name" value="S1"/>
    <property type="match status" value="1"/>
</dbReference>
<dbReference type="SUPFAM" id="SSF54791">
    <property type="entry name" value="Eukaryotic type KH-domain (KH-domain type I)"/>
    <property type="match status" value="1"/>
</dbReference>
<dbReference type="SUPFAM" id="SSF50249">
    <property type="entry name" value="Nucleic acid-binding proteins"/>
    <property type="match status" value="1"/>
</dbReference>
<dbReference type="SUPFAM" id="SSF46915">
    <property type="entry name" value="Polynucleotide phosphorylase/guanosine pentaphosphate synthase (PNPase/GPSI), domain 3"/>
    <property type="match status" value="1"/>
</dbReference>
<dbReference type="SUPFAM" id="SSF55666">
    <property type="entry name" value="Ribonuclease PH domain 2-like"/>
    <property type="match status" value="2"/>
</dbReference>
<dbReference type="SUPFAM" id="SSF54211">
    <property type="entry name" value="Ribosomal protein S5 domain 2-like"/>
    <property type="match status" value="2"/>
</dbReference>
<dbReference type="PROSITE" id="PS50084">
    <property type="entry name" value="KH_TYPE_1"/>
    <property type="match status" value="1"/>
</dbReference>
<dbReference type="PROSITE" id="PS50126">
    <property type="entry name" value="S1"/>
    <property type="match status" value="1"/>
</dbReference>
<feature type="chain" id="PRO_0000329604" description="Polyribonucleotide nucleotidyltransferase">
    <location>
        <begin position="1"/>
        <end position="705"/>
    </location>
</feature>
<feature type="domain" description="KH" evidence="1">
    <location>
        <begin position="552"/>
        <end position="611"/>
    </location>
</feature>
<feature type="domain" description="S1 motif" evidence="1">
    <location>
        <begin position="621"/>
        <end position="689"/>
    </location>
</feature>
<feature type="binding site" evidence="1">
    <location>
        <position position="485"/>
    </location>
    <ligand>
        <name>Mg(2+)</name>
        <dbReference type="ChEBI" id="CHEBI:18420"/>
    </ligand>
</feature>
<feature type="binding site" evidence="1">
    <location>
        <position position="491"/>
    </location>
    <ligand>
        <name>Mg(2+)</name>
        <dbReference type="ChEBI" id="CHEBI:18420"/>
    </ligand>
</feature>
<gene>
    <name evidence="1" type="primary">pnp</name>
    <name type="ordered locus">CTC_01280</name>
</gene>
<protein>
    <recommendedName>
        <fullName evidence="1">Polyribonucleotide nucleotidyltransferase</fullName>
        <ecNumber evidence="1">2.7.7.8</ecNumber>
    </recommendedName>
    <alternativeName>
        <fullName evidence="1">Polynucleotide phosphorylase</fullName>
        <shortName evidence="1">PNPase</shortName>
    </alternativeName>
</protein>
<name>PNP_CLOTE</name>